<name>PRPS1_RAT</name>
<accession>P60892</accession>
<accession>P09329</accession>
<accession>Q5M8A4</accession>
<reference key="1">
    <citation type="journal article" date="1987" name="J. Biol. Chem.">
        <title>Nucleotide and deduced amino acid sequences of two distinct cDNAs for rat phosphoribosylpyrophosphate synthetase.</title>
        <authorList>
            <person name="Taira M."/>
            <person name="Ishijima S."/>
            <person name="Kita K."/>
            <person name="Yamada K."/>
            <person name="Iizasa T."/>
            <person name="Tatibana M."/>
        </authorList>
    </citation>
    <scope>NUCLEOTIDE SEQUENCE [MRNA]</scope>
    <source>
        <tissue>Liver</tissue>
    </source>
</reference>
<reference key="2">
    <citation type="journal article" date="1989" name="Nucleic Acids Res.">
        <title>Complete cDNA sequence of rat phosphoribosylpyrophosphate synthetase subunit I (PRS I).</title>
        <authorList>
            <person name="Ishijima S."/>
            <person name="Taira M."/>
            <person name="Tatibana M."/>
        </authorList>
    </citation>
    <scope>NUCLEOTIDE SEQUENCE [MRNA]</scope>
</reference>
<reference key="3">
    <citation type="journal article" date="1990" name="J. Biol. Chem.">
        <title>Structure of the rat PRPS1 gene encoding phosphoribosylpyrophosphate synthetase subunit I.</title>
        <authorList>
            <person name="Shimada H."/>
            <person name="Taira M."/>
            <person name="Yamada K."/>
            <person name="Iizasa T."/>
            <person name="Tatibana M."/>
        </authorList>
    </citation>
    <scope>NUCLEOTIDE SEQUENCE [GENOMIC DNA]</scope>
</reference>
<reference key="4">
    <citation type="journal article" date="2004" name="Genome Res.">
        <title>The status, quality, and expansion of the NIH full-length cDNA project: the Mammalian Gene Collection (MGC).</title>
        <authorList>
            <consortium name="The MGC Project Team"/>
        </authorList>
    </citation>
    <scope>NUCLEOTIDE SEQUENCE [LARGE SCALE MRNA]</scope>
    <source>
        <tissue>Heart</tissue>
        <tissue>Thymus</tissue>
    </source>
</reference>
<reference key="5">
    <citation type="submission" date="2006-11" db="UniProtKB">
        <authorList>
            <person name="Lubec G."/>
            <person name="Afjehi-Sadat L."/>
        </authorList>
    </citation>
    <scope>PROTEIN SEQUENCE OF 85-96</scope>
    <scope>IDENTIFICATION BY MASS SPECTROMETRY</scope>
    <source>
        <strain>Sprague-Dawley</strain>
        <tissue>Spinal cord</tissue>
    </source>
</reference>
<comment type="function">
    <text>Catalyzes the synthesis of phosphoribosylpyrophosphate (PRPP) that is essential for nucleotide synthesis.</text>
</comment>
<comment type="catalytic activity">
    <reaction>
        <text>D-ribose 5-phosphate + ATP = 5-phospho-alpha-D-ribose 1-diphosphate + AMP + H(+)</text>
        <dbReference type="Rhea" id="RHEA:15609"/>
        <dbReference type="ChEBI" id="CHEBI:15378"/>
        <dbReference type="ChEBI" id="CHEBI:30616"/>
        <dbReference type="ChEBI" id="CHEBI:58017"/>
        <dbReference type="ChEBI" id="CHEBI:78346"/>
        <dbReference type="ChEBI" id="CHEBI:456215"/>
        <dbReference type="EC" id="2.7.6.1"/>
    </reaction>
</comment>
<comment type="cofactor">
    <cofactor>
        <name>Mg(2+)</name>
        <dbReference type="ChEBI" id="CHEBI:18420"/>
    </cofactor>
</comment>
<comment type="activity regulation">
    <text>Activated by magnesium and inorganic phosphate.</text>
</comment>
<comment type="pathway">
    <text>Metabolic intermediate biosynthesis; 5-phospho-alpha-D-ribose 1-diphosphate biosynthesis; 5-phospho-alpha-D-ribose 1-diphosphate from D-ribose 5-phosphate (route I): step 1/1.</text>
</comment>
<comment type="subunit">
    <text evidence="1">Homodimer. The active form is probably a hexamer composed of 3 homodimers (By similarity).</text>
</comment>
<comment type="similarity">
    <text evidence="3">Belongs to the ribose-phosphate pyrophosphokinase family.</text>
</comment>
<sequence length="318" mass="34834">MPNIKIFSGSSHQDLSQKIADRLGLELGKVVTKKFSNQETCVEIGESVRGEDVYIVQSGCGEINDNLMELLIMINACKIASASRVTAVIPCFPYARQDKKDKSRAPISAKLVANMLSVAGADHIITMDLHASQIQGFFDIPVDNLYAEPAVLKWIRENISEWRNCTIVSPDAGGAKRVTSIADRLNVDFALIHKERKKANEVDRMVLVGDVKDRVAILVDDMADTCGTICHAADKLLSAGATRVYAILTHGIFSGPAISRINNACFEAVVVTNTIPQEDKMKHCSKIQVIDISMILAEAIRRTHNGESVSYLFSHVPL</sequence>
<feature type="chain" id="PRO_0000141073" description="Ribose-phosphate pyrophosphokinase 1">
    <location>
        <begin position="1"/>
        <end position="318"/>
    </location>
</feature>
<feature type="region of interest" description="Binding of phosphoribosylpyrophosphate" evidence="2">
    <location>
        <begin position="212"/>
        <end position="227"/>
    </location>
</feature>
<feature type="binding site" evidence="1">
    <location>
        <begin position="96"/>
        <end position="101"/>
    </location>
    <ligand>
        <name>ATP</name>
        <dbReference type="ChEBI" id="CHEBI:30616"/>
    </ligand>
</feature>
<feature type="binding site" evidence="2">
    <location>
        <position position="128"/>
    </location>
    <ligand>
        <name>Mg(2+)</name>
        <dbReference type="ChEBI" id="CHEBI:18420"/>
    </ligand>
</feature>
<feature type="binding site" evidence="1">
    <location>
        <position position="130"/>
    </location>
    <ligand>
        <name>ATP</name>
        <dbReference type="ChEBI" id="CHEBI:30616"/>
    </ligand>
</feature>
<feature type="binding site" evidence="2">
    <location>
        <position position="130"/>
    </location>
    <ligand>
        <name>Mg(2+)</name>
        <dbReference type="ChEBI" id="CHEBI:18420"/>
    </ligand>
</feature>
<feature type="binding site" evidence="2">
    <location>
        <position position="139"/>
    </location>
    <ligand>
        <name>Mg(2+)</name>
        <dbReference type="ChEBI" id="CHEBI:18420"/>
    </ligand>
</feature>
<feature type="binding site" evidence="2">
    <location>
        <position position="143"/>
    </location>
    <ligand>
        <name>Mg(2+)</name>
        <dbReference type="ChEBI" id="CHEBI:18420"/>
    </ligand>
</feature>
<feature type="sequence conflict" description="In Ref. 4; AAH88149." evidence="3" ref="4">
    <original>R</original>
    <variation>K</variation>
    <location>
        <position position="163"/>
    </location>
</feature>
<protein>
    <recommendedName>
        <fullName>Ribose-phosphate pyrophosphokinase 1</fullName>
        <ecNumber>2.7.6.1</ecNumber>
    </recommendedName>
    <alternativeName>
        <fullName>Phosphoribosyl pyrophosphate synthase I</fullName>
        <shortName>PRS-I</shortName>
    </alternativeName>
</protein>
<organism>
    <name type="scientific">Rattus norvegicus</name>
    <name type="common">Rat</name>
    <dbReference type="NCBI Taxonomy" id="10116"/>
    <lineage>
        <taxon>Eukaryota</taxon>
        <taxon>Metazoa</taxon>
        <taxon>Chordata</taxon>
        <taxon>Craniata</taxon>
        <taxon>Vertebrata</taxon>
        <taxon>Euteleostomi</taxon>
        <taxon>Mammalia</taxon>
        <taxon>Eutheria</taxon>
        <taxon>Euarchontoglires</taxon>
        <taxon>Glires</taxon>
        <taxon>Rodentia</taxon>
        <taxon>Myomorpha</taxon>
        <taxon>Muroidea</taxon>
        <taxon>Muridae</taxon>
        <taxon>Murinae</taxon>
        <taxon>Rattus</taxon>
    </lineage>
</organism>
<gene>
    <name type="primary">Prps1</name>
</gene>
<proteinExistence type="evidence at protein level"/>
<keyword id="KW-0067">ATP-binding</keyword>
<keyword id="KW-0903">Direct protein sequencing</keyword>
<keyword id="KW-0418">Kinase</keyword>
<keyword id="KW-0460">Magnesium</keyword>
<keyword id="KW-0479">Metal-binding</keyword>
<keyword id="KW-0545">Nucleotide biosynthesis</keyword>
<keyword id="KW-0547">Nucleotide-binding</keyword>
<keyword id="KW-1185">Reference proteome</keyword>
<keyword id="KW-0808">Transferase</keyword>
<evidence type="ECO:0000250" key="1"/>
<evidence type="ECO:0000255" key="2"/>
<evidence type="ECO:0000305" key="3"/>
<dbReference type="EC" id="2.7.6.1"/>
<dbReference type="EMBL" id="M17258">
    <property type="protein sequence ID" value="AAA41963.1"/>
    <property type="molecule type" value="mRNA"/>
</dbReference>
<dbReference type="EMBL" id="M29392">
    <property type="protein sequence ID" value="AAA41960.1"/>
    <property type="molecule type" value="mRNA"/>
</dbReference>
<dbReference type="EMBL" id="X16554">
    <property type="protein sequence ID" value="CAA34555.1"/>
    <property type="molecule type" value="mRNA"/>
</dbReference>
<dbReference type="EMBL" id="M31084">
    <property type="protein sequence ID" value="AAA41959.1"/>
    <property type="molecule type" value="Genomic_DNA"/>
</dbReference>
<dbReference type="EMBL" id="M31078">
    <property type="protein sequence ID" value="AAA41959.1"/>
    <property type="status" value="JOINED"/>
    <property type="molecule type" value="Genomic_DNA"/>
</dbReference>
<dbReference type="EMBL" id="M31079">
    <property type="protein sequence ID" value="AAA41959.1"/>
    <property type="status" value="JOINED"/>
    <property type="molecule type" value="Genomic_DNA"/>
</dbReference>
<dbReference type="EMBL" id="M31080">
    <property type="protein sequence ID" value="AAA41959.1"/>
    <property type="status" value="JOINED"/>
    <property type="molecule type" value="Genomic_DNA"/>
</dbReference>
<dbReference type="EMBL" id="M31082">
    <property type="protein sequence ID" value="AAA41959.1"/>
    <property type="status" value="JOINED"/>
    <property type="molecule type" value="Genomic_DNA"/>
</dbReference>
<dbReference type="EMBL" id="M31083">
    <property type="protein sequence ID" value="AAA41959.1"/>
    <property type="status" value="JOINED"/>
    <property type="molecule type" value="Genomic_DNA"/>
</dbReference>
<dbReference type="EMBL" id="BC078853">
    <property type="protein sequence ID" value="AAH78853.1"/>
    <property type="molecule type" value="mRNA"/>
</dbReference>
<dbReference type="EMBL" id="BC088149">
    <property type="protein sequence ID" value="AAH88149.1"/>
    <property type="molecule type" value="mRNA"/>
</dbReference>
<dbReference type="PIR" id="A35465">
    <property type="entry name" value="KIRTR1"/>
</dbReference>
<dbReference type="RefSeq" id="NP_058939.1">
    <property type="nucleotide sequence ID" value="NM_017243.2"/>
</dbReference>
<dbReference type="RefSeq" id="XP_008762879.1">
    <property type="nucleotide sequence ID" value="XM_008764657.2"/>
</dbReference>
<dbReference type="SMR" id="P60892"/>
<dbReference type="BioGRID" id="248196">
    <property type="interactions" value="4"/>
</dbReference>
<dbReference type="FunCoup" id="P60892">
    <property type="interactions" value="1986"/>
</dbReference>
<dbReference type="IntAct" id="P60892">
    <property type="interactions" value="5"/>
</dbReference>
<dbReference type="STRING" id="10116.ENSRNOP00000071101"/>
<dbReference type="iPTMnet" id="P60892"/>
<dbReference type="PhosphoSitePlus" id="P60892"/>
<dbReference type="jPOST" id="P60892"/>
<dbReference type="PaxDb" id="10116-ENSRNOP00000029405"/>
<dbReference type="GeneID" id="29562"/>
<dbReference type="KEGG" id="rno:29562"/>
<dbReference type="KEGG" id="rno:314140"/>
<dbReference type="UCSC" id="RGD:61955">
    <property type="organism name" value="rat"/>
</dbReference>
<dbReference type="AGR" id="RGD:1359636"/>
<dbReference type="AGR" id="RGD:61955"/>
<dbReference type="CTD" id="328099"/>
<dbReference type="CTD" id="5631"/>
<dbReference type="RGD" id="61955">
    <property type="gene designation" value="Prps1"/>
</dbReference>
<dbReference type="VEuPathDB" id="HostDB:ENSRNOG00000060262"/>
<dbReference type="eggNOG" id="KOG1448">
    <property type="taxonomic scope" value="Eukaryota"/>
</dbReference>
<dbReference type="HOGENOM" id="CLU_033546_4_0_1"/>
<dbReference type="InParanoid" id="P60892"/>
<dbReference type="OrthoDB" id="413572at2759"/>
<dbReference type="PhylomeDB" id="P60892"/>
<dbReference type="TreeFam" id="TF106366"/>
<dbReference type="Reactome" id="R-RNO-73843">
    <property type="pathway name" value="5-Phosphoribose 1-diphosphate biosynthesis"/>
</dbReference>
<dbReference type="SABIO-RK" id="P60892"/>
<dbReference type="UniPathway" id="UPA00087">
    <property type="reaction ID" value="UER00172"/>
</dbReference>
<dbReference type="PRO" id="PR:P60892"/>
<dbReference type="Proteomes" id="UP000002494">
    <property type="component" value="Chromosome X"/>
</dbReference>
<dbReference type="Bgee" id="ENSRNOG00000060262">
    <property type="expression patterns" value="Expressed in cerebellum and 20 other cell types or tissues"/>
</dbReference>
<dbReference type="GO" id="GO:0005737">
    <property type="term" value="C:cytoplasm"/>
    <property type="evidence" value="ECO:0000318"/>
    <property type="project" value="GO_Central"/>
</dbReference>
<dbReference type="GO" id="GO:0005829">
    <property type="term" value="C:cytosol"/>
    <property type="evidence" value="ECO:0000266"/>
    <property type="project" value="RGD"/>
</dbReference>
<dbReference type="GO" id="GO:0032991">
    <property type="term" value="C:protein-containing complex"/>
    <property type="evidence" value="ECO:0000314"/>
    <property type="project" value="RGD"/>
</dbReference>
<dbReference type="GO" id="GO:0002189">
    <property type="term" value="C:ribose phosphate diphosphokinase complex"/>
    <property type="evidence" value="ECO:0000314"/>
    <property type="project" value="RGD"/>
</dbReference>
<dbReference type="GO" id="GO:0043531">
    <property type="term" value="F:ADP binding"/>
    <property type="evidence" value="ECO:0000314"/>
    <property type="project" value="RGD"/>
</dbReference>
<dbReference type="GO" id="GO:0016208">
    <property type="term" value="F:AMP binding"/>
    <property type="evidence" value="ECO:0000314"/>
    <property type="project" value="RGD"/>
</dbReference>
<dbReference type="GO" id="GO:0005524">
    <property type="term" value="F:ATP binding"/>
    <property type="evidence" value="ECO:0000314"/>
    <property type="project" value="RGD"/>
</dbReference>
<dbReference type="GO" id="GO:0030246">
    <property type="term" value="F:carbohydrate binding"/>
    <property type="evidence" value="ECO:0000314"/>
    <property type="project" value="RGD"/>
</dbReference>
<dbReference type="GO" id="GO:0019003">
    <property type="term" value="F:GDP binding"/>
    <property type="evidence" value="ECO:0000314"/>
    <property type="project" value="RGD"/>
</dbReference>
<dbReference type="GO" id="GO:0042802">
    <property type="term" value="F:identical protein binding"/>
    <property type="evidence" value="ECO:0000266"/>
    <property type="project" value="RGD"/>
</dbReference>
<dbReference type="GO" id="GO:0016301">
    <property type="term" value="F:kinase activity"/>
    <property type="evidence" value="ECO:0007669"/>
    <property type="project" value="UniProtKB-KW"/>
</dbReference>
<dbReference type="GO" id="GO:0000287">
    <property type="term" value="F:magnesium ion binding"/>
    <property type="evidence" value="ECO:0000314"/>
    <property type="project" value="RGD"/>
</dbReference>
<dbReference type="GO" id="GO:0042803">
    <property type="term" value="F:protein homodimerization activity"/>
    <property type="evidence" value="ECO:0000250"/>
    <property type="project" value="UniProtKB"/>
</dbReference>
<dbReference type="GO" id="GO:0004749">
    <property type="term" value="F:ribose phosphate diphosphokinase activity"/>
    <property type="evidence" value="ECO:0000314"/>
    <property type="project" value="RGD"/>
</dbReference>
<dbReference type="GO" id="GO:0006015">
    <property type="term" value="P:5-phosphoribose 1-diphosphate biosynthetic process"/>
    <property type="evidence" value="ECO:0000314"/>
    <property type="project" value="RGD"/>
</dbReference>
<dbReference type="GO" id="GO:0006167">
    <property type="term" value="P:AMP biosynthetic process"/>
    <property type="evidence" value="ECO:0000314"/>
    <property type="project" value="RGD"/>
</dbReference>
<dbReference type="GO" id="GO:0031100">
    <property type="term" value="P:animal organ regeneration"/>
    <property type="evidence" value="ECO:0000270"/>
    <property type="project" value="RGD"/>
</dbReference>
<dbReference type="GO" id="GO:0046101">
    <property type="term" value="P:hypoxanthine biosynthetic process"/>
    <property type="evidence" value="ECO:0000266"/>
    <property type="project" value="RGD"/>
</dbReference>
<dbReference type="GO" id="GO:0007399">
    <property type="term" value="P:nervous system development"/>
    <property type="evidence" value="ECO:0000266"/>
    <property type="project" value="RGD"/>
</dbReference>
<dbReference type="GO" id="GO:0006098">
    <property type="term" value="P:pentose-phosphate shunt"/>
    <property type="evidence" value="ECO:0000266"/>
    <property type="project" value="RGD"/>
</dbReference>
<dbReference type="GO" id="GO:0006144">
    <property type="term" value="P:purine nucleobase metabolic process"/>
    <property type="evidence" value="ECO:0000266"/>
    <property type="project" value="RGD"/>
</dbReference>
<dbReference type="GO" id="GO:0006164">
    <property type="term" value="P:purine nucleotide biosynthetic process"/>
    <property type="evidence" value="ECO:0000266"/>
    <property type="project" value="RGD"/>
</dbReference>
<dbReference type="GO" id="GO:0034418">
    <property type="term" value="P:urate biosynthetic process"/>
    <property type="evidence" value="ECO:0000266"/>
    <property type="project" value="RGD"/>
</dbReference>
<dbReference type="CDD" id="cd06223">
    <property type="entry name" value="PRTases_typeI"/>
    <property type="match status" value="1"/>
</dbReference>
<dbReference type="FunFam" id="3.40.50.2020:FF:000031">
    <property type="entry name" value="Probable PRS4-ribose-phosphate pyrophosphokinase 3"/>
    <property type="match status" value="1"/>
</dbReference>
<dbReference type="FunFam" id="3.40.50.2020:FF:000005">
    <property type="entry name" value="Ribose-phosphate pyrophosphokinase 1"/>
    <property type="match status" value="1"/>
</dbReference>
<dbReference type="Gene3D" id="3.40.50.2020">
    <property type="match status" value="2"/>
</dbReference>
<dbReference type="HAMAP" id="MF_00583_B">
    <property type="entry name" value="RibP_PPkinase_B"/>
    <property type="match status" value="1"/>
</dbReference>
<dbReference type="InterPro" id="IPR000842">
    <property type="entry name" value="PRib_PP_synth_CS"/>
</dbReference>
<dbReference type="InterPro" id="IPR029099">
    <property type="entry name" value="Pribosyltran_N"/>
</dbReference>
<dbReference type="InterPro" id="IPR000836">
    <property type="entry name" value="PRibTrfase_dom"/>
</dbReference>
<dbReference type="InterPro" id="IPR029057">
    <property type="entry name" value="PRTase-like"/>
</dbReference>
<dbReference type="InterPro" id="IPR005946">
    <property type="entry name" value="Rib-P_diPkinase"/>
</dbReference>
<dbReference type="InterPro" id="IPR037515">
    <property type="entry name" value="Rib-P_diPkinase_bac"/>
</dbReference>
<dbReference type="NCBIfam" id="NF002320">
    <property type="entry name" value="PRK01259.1"/>
    <property type="match status" value="1"/>
</dbReference>
<dbReference type="NCBIfam" id="TIGR01251">
    <property type="entry name" value="ribP_PPkin"/>
    <property type="match status" value="1"/>
</dbReference>
<dbReference type="PANTHER" id="PTHR10210">
    <property type="entry name" value="RIBOSE-PHOSPHATE DIPHOSPHOKINASE FAMILY MEMBER"/>
    <property type="match status" value="1"/>
</dbReference>
<dbReference type="PANTHER" id="PTHR10210:SF118">
    <property type="entry name" value="RIBOSE-PHOSPHATE PYROPHOSPHOKINASE 1"/>
    <property type="match status" value="1"/>
</dbReference>
<dbReference type="Pfam" id="PF14572">
    <property type="entry name" value="Pribosyl_synth"/>
    <property type="match status" value="1"/>
</dbReference>
<dbReference type="Pfam" id="PF13793">
    <property type="entry name" value="Pribosyltran_N"/>
    <property type="match status" value="1"/>
</dbReference>
<dbReference type="SMART" id="SM01400">
    <property type="entry name" value="Pribosyltran_N"/>
    <property type="match status" value="1"/>
</dbReference>
<dbReference type="SUPFAM" id="SSF53271">
    <property type="entry name" value="PRTase-like"/>
    <property type="match status" value="1"/>
</dbReference>
<dbReference type="PROSITE" id="PS00114">
    <property type="entry name" value="PRPP_SYNTHASE"/>
    <property type="match status" value="1"/>
</dbReference>